<keyword id="KW-0066">ATP synthesis</keyword>
<keyword id="KW-0139">CF(1)</keyword>
<keyword id="KW-0150">Chloroplast</keyword>
<keyword id="KW-0375">Hydrogen ion transport</keyword>
<keyword id="KW-0406">Ion transport</keyword>
<keyword id="KW-0472">Membrane</keyword>
<keyword id="KW-0934">Plastid</keyword>
<keyword id="KW-0793">Thylakoid</keyword>
<keyword id="KW-0813">Transport</keyword>
<evidence type="ECO:0000255" key="1">
    <source>
        <dbReference type="HAMAP-Rule" id="MF_00530"/>
    </source>
</evidence>
<gene>
    <name evidence="1" type="primary">atpE</name>
</gene>
<feature type="chain" id="PRO_0000188267" description="ATP synthase epsilon chain, chloroplastic">
    <location>
        <begin position="1"/>
        <end position="131"/>
    </location>
</feature>
<dbReference type="EMBL" id="AF041468">
    <property type="protein sequence ID" value="AAC35683.1"/>
    <property type="molecule type" value="Genomic_DNA"/>
</dbReference>
<dbReference type="RefSeq" id="NP_050749.1">
    <property type="nucleotide sequence ID" value="NC_000926.1"/>
</dbReference>
<dbReference type="SMR" id="O78492"/>
<dbReference type="GeneID" id="857054"/>
<dbReference type="HOGENOM" id="CLU_084338_1_2_1"/>
<dbReference type="OMA" id="MTVHCDI"/>
<dbReference type="GO" id="GO:0009535">
    <property type="term" value="C:chloroplast thylakoid membrane"/>
    <property type="evidence" value="ECO:0007669"/>
    <property type="project" value="UniProtKB-SubCell"/>
</dbReference>
<dbReference type="GO" id="GO:0045259">
    <property type="term" value="C:proton-transporting ATP synthase complex"/>
    <property type="evidence" value="ECO:0007669"/>
    <property type="project" value="UniProtKB-KW"/>
</dbReference>
<dbReference type="GO" id="GO:0005524">
    <property type="term" value="F:ATP binding"/>
    <property type="evidence" value="ECO:0007669"/>
    <property type="project" value="UniProtKB-UniRule"/>
</dbReference>
<dbReference type="GO" id="GO:0046933">
    <property type="term" value="F:proton-transporting ATP synthase activity, rotational mechanism"/>
    <property type="evidence" value="ECO:0007669"/>
    <property type="project" value="UniProtKB-UniRule"/>
</dbReference>
<dbReference type="CDD" id="cd12152">
    <property type="entry name" value="F1-ATPase_delta"/>
    <property type="match status" value="1"/>
</dbReference>
<dbReference type="Gene3D" id="2.60.15.10">
    <property type="entry name" value="F0F1 ATP synthase delta/epsilon subunit, N-terminal"/>
    <property type="match status" value="1"/>
</dbReference>
<dbReference type="Gene3D" id="1.10.287.540">
    <property type="entry name" value="Helix hairpin bin"/>
    <property type="match status" value="1"/>
</dbReference>
<dbReference type="HAMAP" id="MF_00530">
    <property type="entry name" value="ATP_synth_epsil_bac"/>
    <property type="match status" value="1"/>
</dbReference>
<dbReference type="InterPro" id="IPR001469">
    <property type="entry name" value="ATP_synth_F1_dsu/esu"/>
</dbReference>
<dbReference type="InterPro" id="IPR020546">
    <property type="entry name" value="ATP_synth_F1_dsu/esu_N"/>
</dbReference>
<dbReference type="InterPro" id="IPR020547">
    <property type="entry name" value="ATP_synth_F1_esu_C"/>
</dbReference>
<dbReference type="InterPro" id="IPR036771">
    <property type="entry name" value="ATPsynth_dsu/esu_N"/>
</dbReference>
<dbReference type="NCBIfam" id="TIGR01216">
    <property type="entry name" value="ATP_synt_epsi"/>
    <property type="match status" value="1"/>
</dbReference>
<dbReference type="PANTHER" id="PTHR13822">
    <property type="entry name" value="ATP SYNTHASE DELTA/EPSILON CHAIN"/>
    <property type="match status" value="1"/>
</dbReference>
<dbReference type="PANTHER" id="PTHR13822:SF10">
    <property type="entry name" value="ATP SYNTHASE EPSILON CHAIN, CHLOROPLASTIC"/>
    <property type="match status" value="1"/>
</dbReference>
<dbReference type="Pfam" id="PF00401">
    <property type="entry name" value="ATP-synt_DE"/>
    <property type="match status" value="1"/>
</dbReference>
<dbReference type="Pfam" id="PF02823">
    <property type="entry name" value="ATP-synt_DE_N"/>
    <property type="match status" value="1"/>
</dbReference>
<dbReference type="SUPFAM" id="SSF51344">
    <property type="entry name" value="Epsilon subunit of F1F0-ATP synthase N-terminal domain"/>
    <property type="match status" value="1"/>
</dbReference>
<accession>O78492</accession>
<reference key="1">
    <citation type="journal article" date="1994" name="J. Phycol.">
        <title>Structural, transcriptional and phylogenetic analyses of the atpB gene cluster from the plastid of Cryptomonas F (Cryptophyceae).</title>
        <authorList>
            <person name="Douglas S.E."/>
            <person name="Murphy C.A."/>
        </authorList>
    </citation>
    <scope>NUCLEOTIDE SEQUENCE [GENOMIC DNA]</scope>
</reference>
<reference key="2">
    <citation type="journal article" date="1999" name="J. Mol. Evol.">
        <title>The plastid genome of the cryptophyte alga, Guillardia theta: complete sequence and conserved synteny groups confirm its common ancestry with red algae.</title>
        <authorList>
            <person name="Douglas S.E."/>
            <person name="Penny S.L."/>
        </authorList>
    </citation>
    <scope>NUCLEOTIDE SEQUENCE [LARGE SCALE GENOMIC DNA]</scope>
</reference>
<sequence length="131" mass="14473">MSIHISIIAPDRTVWDANAEEVILPSSTGQLGILKGHAPLLTALDIGVMRVRVDRDWTPIVLLGGFAEIENDELTILVNGAEEASQIDRDQAQRDLEEMTVKFNEATTNKERIEATQNLRKARARLQAVSA</sequence>
<proteinExistence type="inferred from homology"/>
<comment type="function">
    <text evidence="1">Produces ATP from ADP in the presence of a proton gradient across the membrane.</text>
</comment>
<comment type="subunit">
    <text evidence="1">F-type ATPases have 2 components, CF(1) - the catalytic core - and CF(0) - the membrane proton channel. CF(1) has five subunits: alpha(3), beta(3), gamma(1), delta(1), epsilon(1). CF(0) has three main subunits: a, b and c.</text>
</comment>
<comment type="subcellular location">
    <subcellularLocation>
        <location evidence="1">Plastid</location>
        <location evidence="1">Chloroplast thylakoid membrane</location>
        <topology evidence="1">Peripheral membrane protein</topology>
    </subcellularLocation>
</comment>
<comment type="similarity">
    <text evidence="1">Belongs to the ATPase epsilon chain family.</text>
</comment>
<geneLocation type="chloroplast"/>
<name>ATPE_GUITH</name>
<protein>
    <recommendedName>
        <fullName evidence="1">ATP synthase epsilon chain, chloroplastic</fullName>
    </recommendedName>
    <alternativeName>
        <fullName evidence="1">ATP synthase F1 sector epsilon subunit</fullName>
    </alternativeName>
    <alternativeName>
        <fullName evidence="1">F-ATPase epsilon subunit</fullName>
    </alternativeName>
</protein>
<organism>
    <name type="scientific">Guillardia theta</name>
    <name type="common">Cryptophyte</name>
    <name type="synonym">Cryptomonas phi</name>
    <dbReference type="NCBI Taxonomy" id="55529"/>
    <lineage>
        <taxon>Eukaryota</taxon>
        <taxon>Cryptophyceae</taxon>
        <taxon>Pyrenomonadales</taxon>
        <taxon>Geminigeraceae</taxon>
        <taxon>Guillardia</taxon>
    </lineage>
</organism>